<gene>
    <name type="primary">fabZ</name>
    <name type="synonym">sefA</name>
    <name type="synonym">yaeA</name>
    <name type="ordered locus">b0180</name>
    <name type="ordered locus">JW0175</name>
</gene>
<name>FABZ_ECOLI</name>
<accession>P0A6Q6</accession>
<accession>P21774</accession>
<feature type="chain" id="PRO_0000091673" description="3-hydroxyacyl-[acyl-carrier-protein] dehydratase FabZ">
    <location>
        <begin position="1"/>
        <end position="151"/>
    </location>
</feature>
<feature type="active site" evidence="1">
    <location>
        <position position="54"/>
    </location>
</feature>
<feature type="mutagenesis site" description="In sfhC21; suppresses an ftsH deletion mutant as well as an ftsH temperature-sensitive mutation. Probably stabilizes the enzyme." evidence="2">
    <original>L</original>
    <variation>P</variation>
    <location>
        <position position="85"/>
    </location>
</feature>
<feature type="helix" evidence="7">
    <location>
        <begin position="10"/>
        <end position="16"/>
    </location>
</feature>
<feature type="strand" evidence="7">
    <location>
        <begin position="28"/>
        <end position="33"/>
    </location>
</feature>
<feature type="turn" evidence="7">
    <location>
        <begin position="34"/>
        <end position="36"/>
    </location>
</feature>
<feature type="strand" evidence="7">
    <location>
        <begin position="37"/>
        <end position="43"/>
    </location>
</feature>
<feature type="helix" evidence="7">
    <location>
        <begin position="49"/>
        <end position="52"/>
    </location>
</feature>
<feature type="helix" evidence="7">
    <location>
        <begin position="63"/>
        <end position="81"/>
    </location>
</feature>
<feature type="strand" evidence="7">
    <location>
        <begin position="90"/>
        <end position="101"/>
    </location>
</feature>
<feature type="strand" evidence="7">
    <location>
        <begin position="110"/>
        <end position="121"/>
    </location>
</feature>
<feature type="strand" evidence="7">
    <location>
        <begin position="124"/>
        <end position="133"/>
    </location>
</feature>
<feature type="strand" evidence="7">
    <location>
        <begin position="136"/>
        <end position="148"/>
    </location>
</feature>
<sequence length="151" mass="17033">MTTNTHTLQIEEILELLPHRFPFLLVDRVLDFEEGRFLRAVKNVSVNEPFFQGHFPGKPIFPGVLILEAMAQATGILAFKSVGKLEPGELYYFAGIDEARFKRPVVPGDQMIMEVTFEKTRRGLTRFKGVALVDGKVVCEATMMCARSREA</sequence>
<dbReference type="EC" id="4.2.1.59" evidence="3 4 5"/>
<dbReference type="EMBL" id="M19334">
    <property type="protein sequence ID" value="AAC36917.1"/>
    <property type="molecule type" value="Genomic_DNA"/>
</dbReference>
<dbReference type="EMBL" id="U00096">
    <property type="protein sequence ID" value="AAC73291.1"/>
    <property type="molecule type" value="Genomic_DNA"/>
</dbReference>
<dbReference type="EMBL" id="AP009048">
    <property type="protein sequence ID" value="BAA77855.1"/>
    <property type="molecule type" value="Genomic_DNA"/>
</dbReference>
<dbReference type="EMBL" id="U70214">
    <property type="protein sequence ID" value="AAB08609.1"/>
    <property type="molecule type" value="Genomic_DNA"/>
</dbReference>
<dbReference type="PIR" id="D64742">
    <property type="entry name" value="D64742"/>
</dbReference>
<dbReference type="RefSeq" id="NP_414722.1">
    <property type="nucleotide sequence ID" value="NC_000913.3"/>
</dbReference>
<dbReference type="RefSeq" id="WP_000210739.1">
    <property type="nucleotide sequence ID" value="NZ_STEB01000032.1"/>
</dbReference>
<dbReference type="PDB" id="6N3P">
    <property type="method" value="X-ray"/>
    <property type="resolution" value="2.50 A"/>
    <property type="chains" value="A/B/C/D/E/F=1-150"/>
</dbReference>
<dbReference type="PDBsum" id="6N3P"/>
<dbReference type="SMR" id="P0A6Q6"/>
<dbReference type="BioGRID" id="4263243">
    <property type="interactions" value="441"/>
</dbReference>
<dbReference type="DIP" id="DIP-31868N"/>
<dbReference type="FunCoup" id="P0A6Q6">
    <property type="interactions" value="651"/>
</dbReference>
<dbReference type="IntAct" id="P0A6Q6">
    <property type="interactions" value="34"/>
</dbReference>
<dbReference type="STRING" id="511145.b0180"/>
<dbReference type="SwissLipids" id="SLP:000001787"/>
<dbReference type="jPOST" id="P0A6Q6"/>
<dbReference type="PaxDb" id="511145-b0180"/>
<dbReference type="EnsemblBacteria" id="AAC73291">
    <property type="protein sequence ID" value="AAC73291"/>
    <property type="gene ID" value="b0180"/>
</dbReference>
<dbReference type="GeneID" id="93777245"/>
<dbReference type="GeneID" id="944888"/>
<dbReference type="KEGG" id="ecj:JW0175"/>
<dbReference type="KEGG" id="eco:b0180"/>
<dbReference type="KEGG" id="ecoc:C3026_00825"/>
<dbReference type="PATRIC" id="fig|1411691.4.peg.2099"/>
<dbReference type="EchoBASE" id="EB1261"/>
<dbReference type="eggNOG" id="COG0764">
    <property type="taxonomic scope" value="Bacteria"/>
</dbReference>
<dbReference type="HOGENOM" id="CLU_078912_1_0_6"/>
<dbReference type="InParanoid" id="P0A6Q6"/>
<dbReference type="OMA" id="FPGRPLM"/>
<dbReference type="OrthoDB" id="9772788at2"/>
<dbReference type="PhylomeDB" id="P0A6Q6"/>
<dbReference type="BioCyc" id="EcoCyc:FABZ-MONOMER"/>
<dbReference type="BioCyc" id="MetaCyc:FABZ-MONOMER"/>
<dbReference type="PRO" id="PR:P0A6Q6"/>
<dbReference type="Proteomes" id="UP000000625">
    <property type="component" value="Chromosome"/>
</dbReference>
<dbReference type="GO" id="GO:0005737">
    <property type="term" value="C:cytoplasm"/>
    <property type="evidence" value="ECO:0007669"/>
    <property type="project" value="UniProtKB-SubCell"/>
</dbReference>
<dbReference type="GO" id="GO:0016020">
    <property type="term" value="C:membrane"/>
    <property type="evidence" value="ECO:0007669"/>
    <property type="project" value="GOC"/>
</dbReference>
<dbReference type="GO" id="GO:0019171">
    <property type="term" value="F:(3R)-hydroxyacyl-[acyl-carrier-protein] dehydratase activity"/>
    <property type="evidence" value="ECO:0000314"/>
    <property type="project" value="EcoCyc"/>
</dbReference>
<dbReference type="GO" id="GO:0042802">
    <property type="term" value="F:identical protein binding"/>
    <property type="evidence" value="ECO:0000314"/>
    <property type="project" value="EcoCyc"/>
</dbReference>
<dbReference type="GO" id="GO:0006633">
    <property type="term" value="P:fatty acid biosynthetic process"/>
    <property type="evidence" value="ECO:0000314"/>
    <property type="project" value="EcoCyc"/>
</dbReference>
<dbReference type="GO" id="GO:0009245">
    <property type="term" value="P:lipid A biosynthetic process"/>
    <property type="evidence" value="ECO:0007669"/>
    <property type="project" value="UniProtKB-UniRule"/>
</dbReference>
<dbReference type="CDD" id="cd01288">
    <property type="entry name" value="FabZ"/>
    <property type="match status" value="1"/>
</dbReference>
<dbReference type="FunFam" id="3.10.129.10:FF:000001">
    <property type="entry name" value="3-hydroxyacyl-[acyl-carrier-protein] dehydratase FabZ"/>
    <property type="match status" value="1"/>
</dbReference>
<dbReference type="Gene3D" id="3.10.129.10">
    <property type="entry name" value="Hotdog Thioesterase"/>
    <property type="match status" value="1"/>
</dbReference>
<dbReference type="HAMAP" id="MF_00406">
    <property type="entry name" value="FabZ"/>
    <property type="match status" value="1"/>
</dbReference>
<dbReference type="InterPro" id="IPR013114">
    <property type="entry name" value="FabA_FabZ"/>
</dbReference>
<dbReference type="InterPro" id="IPR010084">
    <property type="entry name" value="FabZ"/>
</dbReference>
<dbReference type="InterPro" id="IPR029069">
    <property type="entry name" value="HotDog_dom_sf"/>
</dbReference>
<dbReference type="NCBIfam" id="TIGR01750">
    <property type="entry name" value="fabZ"/>
    <property type="match status" value="1"/>
</dbReference>
<dbReference type="NCBIfam" id="NF000582">
    <property type="entry name" value="PRK00006.1"/>
    <property type="match status" value="1"/>
</dbReference>
<dbReference type="PANTHER" id="PTHR30272">
    <property type="entry name" value="3-HYDROXYACYL-[ACYL-CARRIER-PROTEIN] DEHYDRATASE"/>
    <property type="match status" value="1"/>
</dbReference>
<dbReference type="PANTHER" id="PTHR30272:SF1">
    <property type="entry name" value="3-HYDROXYACYL-[ACYL-CARRIER-PROTEIN] DEHYDRATASE"/>
    <property type="match status" value="1"/>
</dbReference>
<dbReference type="Pfam" id="PF07977">
    <property type="entry name" value="FabA"/>
    <property type="match status" value="1"/>
</dbReference>
<dbReference type="SUPFAM" id="SSF54637">
    <property type="entry name" value="Thioesterase/thiol ester dehydrase-isomerase"/>
    <property type="match status" value="1"/>
</dbReference>
<comment type="function">
    <text evidence="3 4 5">Involved in unsaturated fatty acids biosynthesis. Catalyzes the dehydration of short chain beta-hydroxyacyl-ACPs and long chain saturated and unsaturated beta-hydroxyacyl-ACPs.</text>
</comment>
<comment type="catalytic activity">
    <reaction evidence="3 4 5">
        <text>a (3R)-hydroxyacyl-[ACP] = a (2E)-enoyl-[ACP] + H2O</text>
        <dbReference type="Rhea" id="RHEA:13097"/>
        <dbReference type="Rhea" id="RHEA-COMP:9925"/>
        <dbReference type="Rhea" id="RHEA-COMP:9945"/>
        <dbReference type="ChEBI" id="CHEBI:15377"/>
        <dbReference type="ChEBI" id="CHEBI:78784"/>
        <dbReference type="ChEBI" id="CHEBI:78827"/>
        <dbReference type="EC" id="4.2.1.59"/>
    </reaction>
    <physiologicalReaction direction="left-to-right" evidence="3 4 5">
        <dbReference type="Rhea" id="RHEA:13098"/>
    </physiologicalReaction>
</comment>
<comment type="catalytic activity">
    <reaction evidence="3 5">
        <text>(3R)-hydroxybutanoyl-[ACP] = (2E)-butenoyl-[ACP] + H2O</text>
        <dbReference type="Rhea" id="RHEA:41808"/>
        <dbReference type="Rhea" id="RHEA-COMP:9626"/>
        <dbReference type="Rhea" id="RHEA-COMP:9627"/>
        <dbReference type="ChEBI" id="CHEBI:15377"/>
        <dbReference type="ChEBI" id="CHEBI:78451"/>
        <dbReference type="ChEBI" id="CHEBI:78453"/>
    </reaction>
    <physiologicalReaction direction="left-to-right" evidence="3 5">
        <dbReference type="Rhea" id="RHEA:41809"/>
    </physiologicalReaction>
</comment>
<comment type="catalytic activity">
    <reaction evidence="5">
        <text>(3R)-hydroxyhexanoyl-[ACP] = (2E)-hexenoyl-[ACP] + H2O</text>
        <dbReference type="Rhea" id="RHEA:41828"/>
        <dbReference type="Rhea" id="RHEA-COMP:9630"/>
        <dbReference type="Rhea" id="RHEA-COMP:9631"/>
        <dbReference type="ChEBI" id="CHEBI:15377"/>
        <dbReference type="ChEBI" id="CHEBI:78457"/>
        <dbReference type="ChEBI" id="CHEBI:78458"/>
    </reaction>
    <physiologicalReaction direction="left-to-right" evidence="5">
        <dbReference type="Rhea" id="RHEA:41829"/>
    </physiologicalReaction>
</comment>
<comment type="catalytic activity">
    <reaction evidence="5">
        <text>(3R)-hydroxyoctanoyl-[ACP] = (2E)-octenoyl-[ACP] + H2O</text>
        <dbReference type="Rhea" id="RHEA:41844"/>
        <dbReference type="Rhea" id="RHEA-COMP:9634"/>
        <dbReference type="Rhea" id="RHEA-COMP:9635"/>
        <dbReference type="ChEBI" id="CHEBI:15377"/>
        <dbReference type="ChEBI" id="CHEBI:78461"/>
        <dbReference type="ChEBI" id="CHEBI:78462"/>
    </reaction>
    <physiologicalReaction direction="left-to-right" evidence="5">
        <dbReference type="Rhea" id="RHEA:41845"/>
    </physiologicalReaction>
</comment>
<comment type="catalytic activity">
    <reaction evidence="5">
        <text>(3R)-hydroxydecanoyl-[ACP] = (2E)-decenoyl-[ACP] + H2O</text>
        <dbReference type="Rhea" id="RHEA:41860"/>
        <dbReference type="Rhea" id="RHEA-COMP:9638"/>
        <dbReference type="Rhea" id="RHEA-COMP:9639"/>
        <dbReference type="ChEBI" id="CHEBI:15377"/>
        <dbReference type="ChEBI" id="CHEBI:78466"/>
        <dbReference type="ChEBI" id="CHEBI:78467"/>
    </reaction>
    <physiologicalReaction direction="left-to-right" evidence="5">
        <dbReference type="Rhea" id="RHEA:41861"/>
    </physiologicalReaction>
</comment>
<comment type="catalytic activity">
    <reaction evidence="5">
        <text>(3R)-hydroxydodecanoyl-[ACP] = (2E)-dodecenoyl-[ACP] + H2O</text>
        <dbReference type="Rhea" id="RHEA:41876"/>
        <dbReference type="Rhea" id="RHEA-COMP:9642"/>
        <dbReference type="Rhea" id="RHEA-COMP:9643"/>
        <dbReference type="ChEBI" id="CHEBI:15377"/>
        <dbReference type="ChEBI" id="CHEBI:78470"/>
        <dbReference type="ChEBI" id="CHEBI:78472"/>
    </reaction>
    <physiologicalReaction direction="left-to-right" evidence="5">
        <dbReference type="Rhea" id="RHEA:41877"/>
    </physiologicalReaction>
</comment>
<comment type="catalytic activity">
    <reaction evidence="4 5">
        <text>(3R)-hydroxytetradecanoyl-[ACP] = (2E)-tetradecenoyl-[ACP] + H2O</text>
        <dbReference type="Rhea" id="RHEA:41892"/>
        <dbReference type="Rhea" id="RHEA-COMP:9646"/>
        <dbReference type="Rhea" id="RHEA-COMP:9647"/>
        <dbReference type="ChEBI" id="CHEBI:15377"/>
        <dbReference type="ChEBI" id="CHEBI:78474"/>
        <dbReference type="ChEBI" id="CHEBI:78475"/>
    </reaction>
    <physiologicalReaction direction="left-to-right" evidence="4 5">
        <dbReference type="Rhea" id="RHEA:41893"/>
    </physiologicalReaction>
</comment>
<comment type="catalytic activity">
    <reaction evidence="5">
        <text>(3R)-hydroxyhexadecanoyl-[ACP] = (2E)-hexadecenoyl-[ACP] + H2O</text>
        <dbReference type="Rhea" id="RHEA:41908"/>
        <dbReference type="Rhea" id="RHEA-COMP:9650"/>
        <dbReference type="Rhea" id="RHEA-COMP:9651"/>
        <dbReference type="ChEBI" id="CHEBI:15377"/>
        <dbReference type="ChEBI" id="CHEBI:78480"/>
        <dbReference type="ChEBI" id="CHEBI:78481"/>
    </reaction>
    <physiologicalReaction direction="left-to-right" evidence="5">
        <dbReference type="Rhea" id="RHEA:41909"/>
    </physiologicalReaction>
</comment>
<comment type="catalytic activity">
    <reaction evidence="5">
        <text>(3R)-hydroxy-(9Z)-hexadecenoyl-[ACP] = (2E,9Z)-hexadecadienoyl-[ACP] + H2O</text>
        <dbReference type="Rhea" id="RHEA:54932"/>
        <dbReference type="Rhea" id="RHEA-COMP:14036"/>
        <dbReference type="Rhea" id="RHEA-COMP:14040"/>
        <dbReference type="ChEBI" id="CHEBI:15377"/>
        <dbReference type="ChEBI" id="CHEBI:138403"/>
        <dbReference type="ChEBI" id="CHEBI:138407"/>
    </reaction>
    <physiologicalReaction direction="left-to-right" evidence="5">
        <dbReference type="Rhea" id="RHEA:54933"/>
    </physiologicalReaction>
</comment>
<comment type="catalytic activity">
    <reaction evidence="3">
        <text>(3R)-hydroxy-5-methylhexanoyl-[ACP] = (2E)-5-methylhexenoyl-[ACP] + H2O</text>
        <dbReference type="Rhea" id="RHEA:55128"/>
        <dbReference type="Rhea" id="RHEA-COMP:14095"/>
        <dbReference type="Rhea" id="RHEA-COMP:14097"/>
        <dbReference type="ChEBI" id="CHEBI:15377"/>
        <dbReference type="ChEBI" id="CHEBI:78986"/>
        <dbReference type="ChEBI" id="CHEBI:138610"/>
    </reaction>
    <physiologicalReaction direction="left-to-right" evidence="3">
        <dbReference type="Rhea" id="RHEA:55129"/>
    </physiologicalReaction>
</comment>
<comment type="subunit">
    <text>Oligomer.</text>
</comment>
<comment type="subcellular location">
    <subcellularLocation>
        <location>Cytoplasm</location>
    </subcellularLocation>
</comment>
<comment type="PTM">
    <text>The N-terminus is blocked.</text>
</comment>
<comment type="similarity">
    <text evidence="6">Belongs to the thioester dehydratase family. FabZ subfamily.</text>
</comment>
<reference key="1">
    <citation type="journal article" date="1988" name="J. Bacteriol.">
        <title>First committed step of lipid A biosynthesis in Escherichia coli: sequence of the lpxA gene.</title>
        <authorList>
            <person name="Coleman J."/>
            <person name="Raetz C.R.H."/>
        </authorList>
    </citation>
    <scope>NUCLEOTIDE SEQUENCE [GENOMIC DNA]</scope>
</reference>
<reference key="2">
    <citation type="submission" date="1994-01" db="EMBL/GenBank/DDBJ databases">
        <authorList>
            <person name="Coleman J."/>
        </authorList>
    </citation>
    <scope>SEQUENCE REVISION TO 140-141 AND 150-151</scope>
</reference>
<reference key="3">
    <citation type="submission" date="1996-02" db="EMBL/GenBank/DDBJ databases">
        <title>Systematic sequencing of the Escherichia coli genome: analysis of the 4.0 - 6.0 min (189,987 - 281,416bp) region.</title>
        <authorList>
            <person name="Takemoto K."/>
            <person name="Mori H."/>
            <person name="Murayama N."/>
            <person name="Kataoka K."/>
            <person name="Yano M."/>
            <person name="Itoh T."/>
            <person name="Yamamoto Y."/>
            <person name="Inokuchi H."/>
            <person name="Miki T."/>
            <person name="Hatada E."/>
            <person name="Fukuda R."/>
            <person name="Ichihara S."/>
            <person name="Mizuno T."/>
            <person name="Makino K."/>
            <person name="Nakata A."/>
            <person name="Yura T."/>
            <person name="Sampei G."/>
            <person name="Mizobuchi K."/>
        </authorList>
    </citation>
    <scope>NUCLEOTIDE SEQUENCE [LARGE SCALE GENOMIC DNA]</scope>
    <source>
        <strain>K12 / W3110 / ATCC 27325 / DSM 5911</strain>
    </source>
</reference>
<reference key="4">
    <citation type="submission" date="1997-01" db="EMBL/GenBank/DDBJ databases">
        <title>Sequence of minutes 4-25 of Escherichia coli.</title>
        <authorList>
            <person name="Chung E."/>
            <person name="Allen E."/>
            <person name="Araujo R."/>
            <person name="Aparicio A.M."/>
            <person name="Davis K."/>
            <person name="Duncan M."/>
            <person name="Federspiel N."/>
            <person name="Hyman R."/>
            <person name="Kalman S."/>
            <person name="Komp C."/>
            <person name="Kurdi O."/>
            <person name="Lew H."/>
            <person name="Lin D."/>
            <person name="Namath A."/>
            <person name="Oefner P."/>
            <person name="Roberts D."/>
            <person name="Schramm S."/>
            <person name="Davis R.W."/>
        </authorList>
    </citation>
    <scope>NUCLEOTIDE SEQUENCE [LARGE SCALE GENOMIC DNA]</scope>
    <source>
        <strain>K12 / MG1655 / ATCC 47076</strain>
    </source>
</reference>
<reference key="5">
    <citation type="journal article" date="1997" name="Science">
        <title>The complete genome sequence of Escherichia coli K-12.</title>
        <authorList>
            <person name="Blattner F.R."/>
            <person name="Plunkett G. III"/>
            <person name="Bloch C.A."/>
            <person name="Perna N.T."/>
            <person name="Burland V."/>
            <person name="Riley M."/>
            <person name="Collado-Vides J."/>
            <person name="Glasner J.D."/>
            <person name="Rode C.K."/>
            <person name="Mayhew G.F."/>
            <person name="Gregor J."/>
            <person name="Davis N.W."/>
            <person name="Kirkpatrick H.A."/>
            <person name="Goeden M.A."/>
            <person name="Rose D.J."/>
            <person name="Mau B."/>
            <person name="Shao Y."/>
        </authorList>
    </citation>
    <scope>NUCLEOTIDE SEQUENCE [LARGE SCALE GENOMIC DNA]</scope>
    <source>
        <strain>K12 / MG1655 / ATCC 47076</strain>
    </source>
</reference>
<reference key="6">
    <citation type="journal article" date="2006" name="Mol. Syst. Biol.">
        <title>Highly accurate genome sequences of Escherichia coli K-12 strains MG1655 and W3110.</title>
        <authorList>
            <person name="Hayashi K."/>
            <person name="Morooka N."/>
            <person name="Yamamoto Y."/>
            <person name="Fujita K."/>
            <person name="Isono K."/>
            <person name="Choi S."/>
            <person name="Ohtsubo E."/>
            <person name="Baba T."/>
            <person name="Wanner B.L."/>
            <person name="Mori H."/>
            <person name="Horiuchi T."/>
        </authorList>
    </citation>
    <scope>NUCLEOTIDE SEQUENCE [LARGE SCALE GENOMIC DNA]</scope>
    <source>
        <strain>K12 / W3110 / ATCC 27325 / DSM 5911</strain>
    </source>
</reference>
<reference key="7">
    <citation type="journal article" date="1993" name="FEMS Microbiol. Lett.">
        <title>Purification and characterization of an 'actomyosin' complex from Escherichia coli W3110.</title>
        <authorList>
            <person name="Foster S.J."/>
        </authorList>
    </citation>
    <scope>PROTEIN SEQUENCE OF 2-18</scope>
    <scope>SIMILARITY</scope>
    <scope>POSSIBLE FUNCTION</scope>
    <source>
        <strain>K12 / W3110 / ATCC 27325 / DSM 5911</strain>
    </source>
</reference>
<reference key="8">
    <citation type="journal article" date="1994" name="J. Biol. Chem.">
        <title>An Escherichia coli gene (FabZ) encoding (3R)-hydroxymyristoyl acyl carrier protein dehydrase. Relation to fabA and suppression of mutations in lipid A biosynthesis.</title>
        <authorList>
            <person name="Mohan S."/>
            <person name="Kelly T.M."/>
            <person name="Eveland S.S."/>
            <person name="Raetz C.R.H."/>
            <person name="Anderson M.S."/>
        </authorList>
    </citation>
    <scope>FUNCTION</scope>
    <scope>CATALYTIC ACTIVITY</scope>
</reference>
<reference key="9">
    <citation type="journal article" date="1996" name="J. Biol. Chem.">
        <title>Roles of the FabA and FabZ beta-hydroxyacyl-acyl carrier protein dehydratases in Escherichia coli fatty acid biosynthesis.</title>
        <authorList>
            <person name="Heath R.J."/>
            <person name="Rock C.O."/>
        </authorList>
    </citation>
    <scope>FUNCTION</scope>
    <scope>CATALYTIC ACTIVITY</scope>
    <scope>SUBSTRATE SPECIFICITY</scope>
</reference>
<reference key="10">
    <citation type="journal article" date="1999" name="Mol. Microbiol.">
        <title>Balanced biosynthesis of major membrane components through regulated degradation of the committed enzyme of lipid A biosynthesis by the AAA protease FtsH (HflB) in Escherichia coli.</title>
        <authorList>
            <person name="Ogura T."/>
            <person name="Inoue K."/>
            <person name="Tatsuta T."/>
            <person name="Suzaki T."/>
            <person name="Karata K."/>
            <person name="Young K."/>
            <person name="Su L.H."/>
            <person name="Fierke C.A."/>
            <person name="Jackman J.E."/>
            <person name="Raetz C.R."/>
            <person name="Coleman J."/>
            <person name="Tomoyasu T."/>
            <person name="Matsuzawa H."/>
        </authorList>
    </citation>
    <scope>MUTAGENESIS OF LEU-85</scope>
    <source>
        <strain>K12 / W3110</strain>
        <strain>W2252</strain>
    </source>
</reference>
<reference key="11">
    <citation type="journal article" date="2000" name="J. Bacteriol.">
        <title>Beta-ketoacyl-acyl carrier protein synthase III (FabH) is a determining factor in branched-chain fatty acid biosynthesis.</title>
        <authorList>
            <person name="Choi K.-H."/>
            <person name="Heath R.J."/>
            <person name="Rock C.O."/>
        </authorList>
    </citation>
    <scope>FUNCTION</scope>
    <scope>CATALYTIC ACTIVITY</scope>
</reference>
<proteinExistence type="evidence at protein level"/>
<organism>
    <name type="scientific">Escherichia coli (strain K12)</name>
    <dbReference type="NCBI Taxonomy" id="83333"/>
    <lineage>
        <taxon>Bacteria</taxon>
        <taxon>Pseudomonadati</taxon>
        <taxon>Pseudomonadota</taxon>
        <taxon>Gammaproteobacteria</taxon>
        <taxon>Enterobacterales</taxon>
        <taxon>Enterobacteriaceae</taxon>
        <taxon>Escherichia</taxon>
    </lineage>
</organism>
<evidence type="ECO:0000250" key="1"/>
<evidence type="ECO:0000269" key="2">
    <source>
    </source>
</evidence>
<evidence type="ECO:0000269" key="3">
    <source>
    </source>
</evidence>
<evidence type="ECO:0000269" key="4">
    <source>
    </source>
</evidence>
<evidence type="ECO:0000269" key="5">
    <source>
    </source>
</evidence>
<evidence type="ECO:0000305" key="6"/>
<evidence type="ECO:0007829" key="7">
    <source>
        <dbReference type="PDB" id="6N3P"/>
    </source>
</evidence>
<keyword id="KW-0002">3D-structure</keyword>
<keyword id="KW-0963">Cytoplasm</keyword>
<keyword id="KW-0903">Direct protein sequencing</keyword>
<keyword id="KW-0441">Lipid A biosynthesis</keyword>
<keyword id="KW-0444">Lipid biosynthesis</keyword>
<keyword id="KW-0443">Lipid metabolism</keyword>
<keyword id="KW-0456">Lyase</keyword>
<keyword id="KW-1185">Reference proteome</keyword>
<protein>
    <recommendedName>
        <fullName>3-hydroxyacyl-[acyl-carrier-protein] dehydratase FabZ</fullName>
        <ecNumber evidence="3 4 5">4.2.1.59</ecNumber>
    </recommendedName>
    <alternativeName>
        <fullName>(3R)-hydroxymyristoyl-[acyl-carrier-protein] dehydratase</fullName>
        <shortName>(3R)-hydroxymyristoyl-ACP dehydrase</shortName>
    </alternativeName>
    <alternativeName>
        <fullName>17 kDa actomyosin component</fullName>
    </alternativeName>
    <alternativeName>
        <fullName>Beta-hydroxyacyl-ACP dehydratase</fullName>
    </alternativeName>
</protein>